<sequence>MIEFGDFYRLIAKGPLSPWLDILPAQLSAWQRESLHGKFKTWFNAVEHLPQLTPTTLDLHSGVRAEMSPPISAGQREGMENMLRALMPWRKGPFSLYGLEIDTEWRSDWKWQRVLPHISPLAGRTILDVGCGSGYHLWRMIGEGAHLAVGIDPMQLFLCQFEAIRKLLGGDQRAHVLPLGIEQLPELAAFDTVFSMGVLYHRRSPLDHLYQLKNQLVTDGELVLETLVVEGDSQQVLVPGDRYAQMRNVYFIPSAPALKAWLEKCGFVDVRIADMAVTTTEEQRRTDWMTSESLAEFLDPHDHSKTVEGYPAPLRAVLIARKP</sequence>
<feature type="chain" id="PRO_1000201317" description="tRNA U34 carboxymethyltransferase">
    <location>
        <begin position="1"/>
        <end position="323"/>
    </location>
</feature>
<feature type="binding site" evidence="1">
    <location>
        <position position="91"/>
    </location>
    <ligand>
        <name>carboxy-S-adenosyl-L-methionine</name>
        <dbReference type="ChEBI" id="CHEBI:134278"/>
    </ligand>
</feature>
<feature type="binding site" evidence="1">
    <location>
        <position position="105"/>
    </location>
    <ligand>
        <name>carboxy-S-adenosyl-L-methionine</name>
        <dbReference type="ChEBI" id="CHEBI:134278"/>
    </ligand>
</feature>
<feature type="binding site" evidence="1">
    <location>
        <position position="110"/>
    </location>
    <ligand>
        <name>carboxy-S-adenosyl-L-methionine</name>
        <dbReference type="ChEBI" id="CHEBI:134278"/>
    </ligand>
</feature>
<feature type="binding site" evidence="1">
    <location>
        <position position="130"/>
    </location>
    <ligand>
        <name>carboxy-S-adenosyl-L-methionine</name>
        <dbReference type="ChEBI" id="CHEBI:134278"/>
    </ligand>
</feature>
<feature type="binding site" evidence="1">
    <location>
        <begin position="181"/>
        <end position="182"/>
    </location>
    <ligand>
        <name>carboxy-S-adenosyl-L-methionine</name>
        <dbReference type="ChEBI" id="CHEBI:134278"/>
    </ligand>
</feature>
<feature type="binding site" evidence="1">
    <location>
        <position position="196"/>
    </location>
    <ligand>
        <name>carboxy-S-adenosyl-L-methionine</name>
        <dbReference type="ChEBI" id="CHEBI:134278"/>
    </ligand>
</feature>
<feature type="binding site" evidence="1">
    <location>
        <position position="200"/>
    </location>
    <ligand>
        <name>carboxy-S-adenosyl-L-methionine</name>
        <dbReference type="ChEBI" id="CHEBI:134278"/>
    </ligand>
</feature>
<feature type="binding site" evidence="1">
    <location>
        <position position="315"/>
    </location>
    <ligand>
        <name>carboxy-S-adenosyl-L-methionine</name>
        <dbReference type="ChEBI" id="CHEBI:134278"/>
    </ligand>
</feature>
<comment type="function">
    <text evidence="1">Catalyzes carboxymethyl transfer from carboxy-S-adenosyl-L-methionine (Cx-SAM) to 5-hydroxyuridine (ho5U) to form 5-carboxymethoxyuridine (cmo5U) at position 34 in tRNAs.</text>
</comment>
<comment type="catalytic activity">
    <reaction evidence="1">
        <text>carboxy-S-adenosyl-L-methionine + 5-hydroxyuridine(34) in tRNA = 5-carboxymethoxyuridine(34) in tRNA + S-adenosyl-L-homocysteine + H(+)</text>
        <dbReference type="Rhea" id="RHEA:52848"/>
        <dbReference type="Rhea" id="RHEA-COMP:13381"/>
        <dbReference type="Rhea" id="RHEA-COMP:13383"/>
        <dbReference type="ChEBI" id="CHEBI:15378"/>
        <dbReference type="ChEBI" id="CHEBI:57856"/>
        <dbReference type="ChEBI" id="CHEBI:134278"/>
        <dbReference type="ChEBI" id="CHEBI:136877"/>
        <dbReference type="ChEBI" id="CHEBI:136879"/>
    </reaction>
</comment>
<comment type="subunit">
    <text evidence="1">Homotetramer.</text>
</comment>
<comment type="similarity">
    <text evidence="1">Belongs to the class I-like SAM-binding methyltransferase superfamily. CmoB family.</text>
</comment>
<keyword id="KW-0808">Transferase</keyword>
<keyword id="KW-0819">tRNA processing</keyword>
<accession>B2K315</accession>
<reference key="1">
    <citation type="submission" date="2008-04" db="EMBL/GenBank/DDBJ databases">
        <title>Complete sequence of Yersinia pseudotuberculosis PB1/+.</title>
        <authorList>
            <person name="Copeland A."/>
            <person name="Lucas S."/>
            <person name="Lapidus A."/>
            <person name="Glavina del Rio T."/>
            <person name="Dalin E."/>
            <person name="Tice H."/>
            <person name="Bruce D."/>
            <person name="Goodwin L."/>
            <person name="Pitluck S."/>
            <person name="Munk A.C."/>
            <person name="Brettin T."/>
            <person name="Detter J.C."/>
            <person name="Han C."/>
            <person name="Tapia R."/>
            <person name="Schmutz J."/>
            <person name="Larimer F."/>
            <person name="Land M."/>
            <person name="Hauser L."/>
            <person name="Challacombe J.F."/>
            <person name="Green L."/>
            <person name="Lindler L.E."/>
            <person name="Nikolich M.P."/>
            <person name="Richardson P."/>
        </authorList>
    </citation>
    <scope>NUCLEOTIDE SEQUENCE [LARGE SCALE GENOMIC DNA]</scope>
    <source>
        <strain>PB1/+</strain>
    </source>
</reference>
<organism>
    <name type="scientific">Yersinia pseudotuberculosis serotype IB (strain PB1/+)</name>
    <dbReference type="NCBI Taxonomy" id="502801"/>
    <lineage>
        <taxon>Bacteria</taxon>
        <taxon>Pseudomonadati</taxon>
        <taxon>Pseudomonadota</taxon>
        <taxon>Gammaproteobacteria</taxon>
        <taxon>Enterobacterales</taxon>
        <taxon>Yersiniaceae</taxon>
        <taxon>Yersinia</taxon>
    </lineage>
</organism>
<evidence type="ECO:0000255" key="1">
    <source>
        <dbReference type="HAMAP-Rule" id="MF_01590"/>
    </source>
</evidence>
<proteinExistence type="inferred from homology"/>
<protein>
    <recommendedName>
        <fullName evidence="1">tRNA U34 carboxymethyltransferase</fullName>
        <ecNumber evidence="1">2.5.1.-</ecNumber>
    </recommendedName>
</protein>
<name>CMOB_YERPB</name>
<gene>
    <name evidence="1" type="primary">cmoB</name>
    <name type="ordered locus">YPTS_2091</name>
</gene>
<dbReference type="EC" id="2.5.1.-" evidence="1"/>
<dbReference type="EMBL" id="CP001048">
    <property type="protein sequence ID" value="ACC89054.1"/>
    <property type="molecule type" value="Genomic_DNA"/>
</dbReference>
<dbReference type="RefSeq" id="WP_011192411.1">
    <property type="nucleotide sequence ID" value="NZ_CP009780.1"/>
</dbReference>
<dbReference type="SMR" id="B2K315"/>
<dbReference type="GeneID" id="49785978"/>
<dbReference type="KEGG" id="ypb:YPTS_2091"/>
<dbReference type="PATRIC" id="fig|502801.10.peg.1481"/>
<dbReference type="GO" id="GO:0008168">
    <property type="term" value="F:methyltransferase activity"/>
    <property type="evidence" value="ECO:0007669"/>
    <property type="project" value="TreeGrafter"/>
</dbReference>
<dbReference type="GO" id="GO:0016765">
    <property type="term" value="F:transferase activity, transferring alkyl or aryl (other than methyl) groups"/>
    <property type="evidence" value="ECO:0007669"/>
    <property type="project" value="UniProtKB-UniRule"/>
</dbReference>
<dbReference type="GO" id="GO:0002098">
    <property type="term" value="P:tRNA wobble uridine modification"/>
    <property type="evidence" value="ECO:0007669"/>
    <property type="project" value="InterPro"/>
</dbReference>
<dbReference type="CDD" id="cd02440">
    <property type="entry name" value="AdoMet_MTases"/>
    <property type="match status" value="1"/>
</dbReference>
<dbReference type="Gene3D" id="3.40.50.150">
    <property type="entry name" value="Vaccinia Virus protein VP39"/>
    <property type="match status" value="1"/>
</dbReference>
<dbReference type="HAMAP" id="MF_01590">
    <property type="entry name" value="tRNA_carboxymethyltr_CmoB"/>
    <property type="match status" value="1"/>
</dbReference>
<dbReference type="InterPro" id="IPR010017">
    <property type="entry name" value="CmoB"/>
</dbReference>
<dbReference type="InterPro" id="IPR027555">
    <property type="entry name" value="Mo5U34_MeTrfas-like"/>
</dbReference>
<dbReference type="InterPro" id="IPR029063">
    <property type="entry name" value="SAM-dependent_MTases_sf"/>
</dbReference>
<dbReference type="NCBIfam" id="NF011650">
    <property type="entry name" value="PRK15068.1"/>
    <property type="match status" value="1"/>
</dbReference>
<dbReference type="NCBIfam" id="TIGR00452">
    <property type="entry name" value="tRNA 5-methoxyuridine(34)/uridine 5-oxyacetic acid(34) synthase CmoB"/>
    <property type="match status" value="1"/>
</dbReference>
<dbReference type="PANTHER" id="PTHR43464">
    <property type="entry name" value="METHYLTRANSFERASE"/>
    <property type="match status" value="1"/>
</dbReference>
<dbReference type="PANTHER" id="PTHR43464:SF95">
    <property type="entry name" value="TRNA U34 CARBOXYMETHYLTRANSFERASE"/>
    <property type="match status" value="1"/>
</dbReference>
<dbReference type="Pfam" id="PF08003">
    <property type="entry name" value="Methyltransf_9"/>
    <property type="match status" value="1"/>
</dbReference>
<dbReference type="SUPFAM" id="SSF53335">
    <property type="entry name" value="S-adenosyl-L-methionine-dependent methyltransferases"/>
    <property type="match status" value="1"/>
</dbReference>